<dbReference type="EMBL" id="AK024955">
    <property type="protein sequence ID" value="BAB15042.1"/>
    <property type="molecule type" value="mRNA"/>
</dbReference>
<dbReference type="EMBL" id="BC126156">
    <property type="protein sequence ID" value="AAI26157.1"/>
    <property type="molecule type" value="mRNA"/>
</dbReference>
<dbReference type="EMBL" id="BC136298">
    <property type="protein sequence ID" value="AAI36299.1"/>
    <property type="molecule type" value="mRNA"/>
</dbReference>
<dbReference type="CCDS" id="CCDS6518.1"/>
<dbReference type="RefSeq" id="NP_075052.1">
    <property type="nucleotide sequence ID" value="NM_022901.3"/>
</dbReference>
<dbReference type="SMR" id="Q9H756"/>
<dbReference type="BioGRID" id="122345">
    <property type="interactions" value="1"/>
</dbReference>
<dbReference type="FunCoup" id="Q9H756">
    <property type="interactions" value="93"/>
</dbReference>
<dbReference type="IntAct" id="Q9H756">
    <property type="interactions" value="1"/>
</dbReference>
<dbReference type="STRING" id="9606.ENSP00000369395"/>
<dbReference type="GlyCosmos" id="Q9H756">
    <property type="glycosylation" value="10 sites, No reported glycans"/>
</dbReference>
<dbReference type="GlyGen" id="Q9H756">
    <property type="glycosylation" value="10 sites, 18 N-linked glycans (3 sites)"/>
</dbReference>
<dbReference type="iPTMnet" id="Q9H756"/>
<dbReference type="PhosphoSitePlus" id="Q9H756"/>
<dbReference type="BioMuta" id="LRRC19"/>
<dbReference type="DMDM" id="51701695"/>
<dbReference type="jPOST" id="Q9H756"/>
<dbReference type="MassIVE" id="Q9H756"/>
<dbReference type="PaxDb" id="9606-ENSP00000369395"/>
<dbReference type="PeptideAtlas" id="Q9H756"/>
<dbReference type="ProteomicsDB" id="81081"/>
<dbReference type="Antibodypedia" id="2688">
    <property type="antibodies" value="136 antibodies from 24 providers"/>
</dbReference>
<dbReference type="DNASU" id="64922"/>
<dbReference type="Ensembl" id="ENST00000380055.6">
    <property type="protein sequence ID" value="ENSP00000369395.5"/>
    <property type="gene ID" value="ENSG00000184434.8"/>
</dbReference>
<dbReference type="GeneID" id="64922"/>
<dbReference type="KEGG" id="hsa:64922"/>
<dbReference type="MANE-Select" id="ENST00000380055.6">
    <property type="protein sequence ID" value="ENSP00000369395.5"/>
    <property type="RefSeq nucleotide sequence ID" value="NM_022901.3"/>
    <property type="RefSeq protein sequence ID" value="NP_075052.1"/>
</dbReference>
<dbReference type="UCSC" id="uc003zqh.4">
    <property type="organism name" value="human"/>
</dbReference>
<dbReference type="AGR" id="HGNC:23379"/>
<dbReference type="CTD" id="64922"/>
<dbReference type="DisGeNET" id="64922"/>
<dbReference type="GeneCards" id="LRRC19"/>
<dbReference type="HGNC" id="HGNC:23379">
    <property type="gene designation" value="LRRC19"/>
</dbReference>
<dbReference type="HPA" id="ENSG00000184434">
    <property type="expression patterns" value="Group enriched (intestine, kidney)"/>
</dbReference>
<dbReference type="MIM" id="619068">
    <property type="type" value="gene"/>
</dbReference>
<dbReference type="neXtProt" id="NX_Q9H756"/>
<dbReference type="OpenTargets" id="ENSG00000184434"/>
<dbReference type="PharmGKB" id="PA134892454"/>
<dbReference type="VEuPathDB" id="HostDB:ENSG00000184434"/>
<dbReference type="eggNOG" id="KOG0619">
    <property type="taxonomic scope" value="Eukaryota"/>
</dbReference>
<dbReference type="GeneTree" id="ENSGT00940000161278"/>
<dbReference type="HOGENOM" id="CLU_063696_1_0_1"/>
<dbReference type="InParanoid" id="Q9H756"/>
<dbReference type="OMA" id="EVKCNFT"/>
<dbReference type="OrthoDB" id="1394818at2759"/>
<dbReference type="PAN-GO" id="Q9H756">
    <property type="GO annotations" value="4 GO annotations based on evolutionary models"/>
</dbReference>
<dbReference type="PhylomeDB" id="Q9H756"/>
<dbReference type="TreeFam" id="TF335466"/>
<dbReference type="PathwayCommons" id="Q9H756"/>
<dbReference type="BioGRID-ORCS" id="64922">
    <property type="hits" value="7 hits in 1095 CRISPR screens"/>
</dbReference>
<dbReference type="GenomeRNAi" id="64922"/>
<dbReference type="Pharos" id="Q9H756">
    <property type="development level" value="Tbio"/>
</dbReference>
<dbReference type="PRO" id="PR:Q9H756"/>
<dbReference type="Proteomes" id="UP000005640">
    <property type="component" value="Chromosome 9"/>
</dbReference>
<dbReference type="RNAct" id="Q9H756">
    <property type="molecule type" value="protein"/>
</dbReference>
<dbReference type="Bgee" id="ENSG00000184434">
    <property type="expression patterns" value="Expressed in jejunal mucosa and 79 other cell types or tissues"/>
</dbReference>
<dbReference type="GO" id="GO:0005886">
    <property type="term" value="C:plasma membrane"/>
    <property type="evidence" value="ECO:0000318"/>
    <property type="project" value="GO_Central"/>
</dbReference>
<dbReference type="GO" id="GO:0038023">
    <property type="term" value="F:signaling receptor activity"/>
    <property type="evidence" value="ECO:0000318"/>
    <property type="project" value="GO_Central"/>
</dbReference>
<dbReference type="GO" id="GO:0048874">
    <property type="term" value="P:host-mediated regulation of intestinal microbiota composition"/>
    <property type="evidence" value="ECO:0000250"/>
    <property type="project" value="UniProtKB"/>
</dbReference>
<dbReference type="GO" id="GO:0043123">
    <property type="term" value="P:positive regulation of canonical NF-kappaB signal transduction"/>
    <property type="evidence" value="ECO:0000250"/>
    <property type="project" value="UniProtKB"/>
</dbReference>
<dbReference type="GO" id="GO:1901224">
    <property type="term" value="P:positive regulation of non-canonical NF-kappaB signal transduction"/>
    <property type="evidence" value="ECO:0000314"/>
    <property type="project" value="MGI"/>
</dbReference>
<dbReference type="GO" id="GO:0001817">
    <property type="term" value="P:regulation of cytokine production"/>
    <property type="evidence" value="ECO:0000250"/>
    <property type="project" value="UniProtKB"/>
</dbReference>
<dbReference type="GO" id="GO:0050727">
    <property type="term" value="P:regulation of inflammatory response"/>
    <property type="evidence" value="ECO:0000250"/>
    <property type="project" value="UniProtKB"/>
</dbReference>
<dbReference type="GO" id="GO:0002224">
    <property type="term" value="P:toll-like receptor signaling pathway"/>
    <property type="evidence" value="ECO:0000318"/>
    <property type="project" value="GO_Central"/>
</dbReference>
<dbReference type="FunFam" id="3.80.10.10:FF:000865">
    <property type="entry name" value="Leucine-rich repeat-containing protein 19"/>
    <property type="match status" value="1"/>
</dbReference>
<dbReference type="FunFam" id="3.80.10.10:FF:000866">
    <property type="entry name" value="Leucine-rich repeat-containing protein 19"/>
    <property type="match status" value="1"/>
</dbReference>
<dbReference type="Gene3D" id="3.80.10.10">
    <property type="entry name" value="Ribonuclease Inhibitor"/>
    <property type="match status" value="2"/>
</dbReference>
<dbReference type="InterPro" id="IPR000483">
    <property type="entry name" value="Cys-rich_flank_reg_C"/>
</dbReference>
<dbReference type="InterPro" id="IPR001611">
    <property type="entry name" value="Leu-rich_rpt"/>
</dbReference>
<dbReference type="InterPro" id="IPR003591">
    <property type="entry name" value="Leu-rich_rpt_typical-subtyp"/>
</dbReference>
<dbReference type="InterPro" id="IPR032675">
    <property type="entry name" value="LRR_dom_sf"/>
</dbReference>
<dbReference type="PANTHER" id="PTHR31450:SF4">
    <property type="entry name" value="LEUCINE-RICH REPEAT-CONTAINING PROTEIN 19"/>
    <property type="match status" value="1"/>
</dbReference>
<dbReference type="PANTHER" id="PTHR31450">
    <property type="entry name" value="LEUCINE-RICH REPEAT-CONTAINING PROTEIN 19 LRRC19 FAMILY MEMBER"/>
    <property type="match status" value="1"/>
</dbReference>
<dbReference type="Pfam" id="PF15176">
    <property type="entry name" value="LRR19-TM"/>
    <property type="match status" value="1"/>
</dbReference>
<dbReference type="Pfam" id="PF13855">
    <property type="entry name" value="LRR_8"/>
    <property type="match status" value="1"/>
</dbReference>
<dbReference type="SMART" id="SM00369">
    <property type="entry name" value="LRR_TYP"/>
    <property type="match status" value="4"/>
</dbReference>
<dbReference type="SMART" id="SM00082">
    <property type="entry name" value="LRRCT"/>
    <property type="match status" value="1"/>
</dbReference>
<dbReference type="SUPFAM" id="SSF52058">
    <property type="entry name" value="L domain-like"/>
    <property type="match status" value="1"/>
</dbReference>
<reference key="1">
    <citation type="journal article" date="2004" name="Nat. Genet.">
        <title>Complete sequencing and characterization of 21,243 full-length human cDNAs.</title>
        <authorList>
            <person name="Ota T."/>
            <person name="Suzuki Y."/>
            <person name="Nishikawa T."/>
            <person name="Otsuki T."/>
            <person name="Sugiyama T."/>
            <person name="Irie R."/>
            <person name="Wakamatsu A."/>
            <person name="Hayashi K."/>
            <person name="Sato H."/>
            <person name="Nagai K."/>
            <person name="Kimura K."/>
            <person name="Makita H."/>
            <person name="Sekine M."/>
            <person name="Obayashi M."/>
            <person name="Nishi T."/>
            <person name="Shibahara T."/>
            <person name="Tanaka T."/>
            <person name="Ishii S."/>
            <person name="Yamamoto J."/>
            <person name="Saito K."/>
            <person name="Kawai Y."/>
            <person name="Isono Y."/>
            <person name="Nakamura Y."/>
            <person name="Nagahari K."/>
            <person name="Murakami K."/>
            <person name="Yasuda T."/>
            <person name="Iwayanagi T."/>
            <person name="Wagatsuma M."/>
            <person name="Shiratori A."/>
            <person name="Sudo H."/>
            <person name="Hosoiri T."/>
            <person name="Kaku Y."/>
            <person name="Kodaira H."/>
            <person name="Kondo H."/>
            <person name="Sugawara M."/>
            <person name="Takahashi M."/>
            <person name="Kanda K."/>
            <person name="Yokoi T."/>
            <person name="Furuya T."/>
            <person name="Kikkawa E."/>
            <person name="Omura Y."/>
            <person name="Abe K."/>
            <person name="Kamihara K."/>
            <person name="Katsuta N."/>
            <person name="Sato K."/>
            <person name="Tanikawa M."/>
            <person name="Yamazaki M."/>
            <person name="Ninomiya K."/>
            <person name="Ishibashi T."/>
            <person name="Yamashita H."/>
            <person name="Murakawa K."/>
            <person name="Fujimori K."/>
            <person name="Tanai H."/>
            <person name="Kimata M."/>
            <person name="Watanabe M."/>
            <person name="Hiraoka S."/>
            <person name="Chiba Y."/>
            <person name="Ishida S."/>
            <person name="Ono Y."/>
            <person name="Takiguchi S."/>
            <person name="Watanabe S."/>
            <person name="Yosida M."/>
            <person name="Hotuta T."/>
            <person name="Kusano J."/>
            <person name="Kanehori K."/>
            <person name="Takahashi-Fujii A."/>
            <person name="Hara H."/>
            <person name="Tanase T.-O."/>
            <person name="Nomura Y."/>
            <person name="Togiya S."/>
            <person name="Komai F."/>
            <person name="Hara R."/>
            <person name="Takeuchi K."/>
            <person name="Arita M."/>
            <person name="Imose N."/>
            <person name="Musashino K."/>
            <person name="Yuuki H."/>
            <person name="Oshima A."/>
            <person name="Sasaki N."/>
            <person name="Aotsuka S."/>
            <person name="Yoshikawa Y."/>
            <person name="Matsunawa H."/>
            <person name="Ichihara T."/>
            <person name="Shiohata N."/>
            <person name="Sano S."/>
            <person name="Moriya S."/>
            <person name="Momiyama H."/>
            <person name="Satoh N."/>
            <person name="Takami S."/>
            <person name="Terashima Y."/>
            <person name="Suzuki O."/>
            <person name="Nakagawa S."/>
            <person name="Senoh A."/>
            <person name="Mizoguchi H."/>
            <person name="Goto Y."/>
            <person name="Shimizu F."/>
            <person name="Wakebe H."/>
            <person name="Hishigaki H."/>
            <person name="Watanabe T."/>
            <person name="Sugiyama A."/>
            <person name="Takemoto M."/>
            <person name="Kawakami B."/>
            <person name="Yamazaki M."/>
            <person name="Watanabe K."/>
            <person name="Kumagai A."/>
            <person name="Itakura S."/>
            <person name="Fukuzumi Y."/>
            <person name="Fujimori Y."/>
            <person name="Komiyama M."/>
            <person name="Tashiro H."/>
            <person name="Tanigami A."/>
            <person name="Fujiwara T."/>
            <person name="Ono T."/>
            <person name="Yamada K."/>
            <person name="Fujii Y."/>
            <person name="Ozaki K."/>
            <person name="Hirao M."/>
            <person name="Ohmori Y."/>
            <person name="Kawabata A."/>
            <person name="Hikiji T."/>
            <person name="Kobatake N."/>
            <person name="Inagaki H."/>
            <person name="Ikema Y."/>
            <person name="Okamoto S."/>
            <person name="Okitani R."/>
            <person name="Kawakami T."/>
            <person name="Noguchi S."/>
            <person name="Itoh T."/>
            <person name="Shigeta K."/>
            <person name="Senba T."/>
            <person name="Matsumura K."/>
            <person name="Nakajima Y."/>
            <person name="Mizuno T."/>
            <person name="Morinaga M."/>
            <person name="Sasaki M."/>
            <person name="Togashi T."/>
            <person name="Oyama M."/>
            <person name="Hata H."/>
            <person name="Watanabe M."/>
            <person name="Komatsu T."/>
            <person name="Mizushima-Sugano J."/>
            <person name="Satoh T."/>
            <person name="Shirai Y."/>
            <person name="Takahashi Y."/>
            <person name="Nakagawa K."/>
            <person name="Okumura K."/>
            <person name="Nagase T."/>
            <person name="Nomura N."/>
            <person name="Kikuchi H."/>
            <person name="Masuho Y."/>
            <person name="Yamashita R."/>
            <person name="Nakai K."/>
            <person name="Yada T."/>
            <person name="Nakamura Y."/>
            <person name="Ohara O."/>
            <person name="Isogai T."/>
            <person name="Sugano S."/>
        </authorList>
    </citation>
    <scope>NUCLEOTIDE SEQUENCE [LARGE SCALE MRNA]</scope>
    <source>
        <tissue>Colon</tissue>
    </source>
</reference>
<reference key="2">
    <citation type="journal article" date="2004" name="Genome Res.">
        <title>The status, quality, and expansion of the NIH full-length cDNA project: the Mammalian Gene Collection (MGC).</title>
        <authorList>
            <consortium name="The MGC Project Team"/>
        </authorList>
    </citation>
    <scope>NUCLEOTIDE SEQUENCE [LARGE SCALE MRNA]</scope>
    <source>
        <tissue>Colon</tissue>
        <tissue>Testis</tissue>
    </source>
</reference>
<reference key="3">
    <citation type="journal article" date="2009" name="Biochem. Biophys. Res. Commun.">
        <title>LRRC19, a novel member of the leucine-rich repeat protein family, activates NF-kappaB and induces expression of proinflammatory cytokines.</title>
        <authorList>
            <person name="Chai L."/>
            <person name="Dai L."/>
            <person name="Che Y."/>
            <person name="Xu J."/>
            <person name="Liu G."/>
            <person name="Zhang Z."/>
            <person name="Yang R."/>
        </authorList>
    </citation>
    <scope>FUNCTION</scope>
    <scope>TISSUE SPECIFICITY</scope>
    <scope>ACTIVITY REGULATION</scope>
</reference>
<reference key="4">
    <citation type="journal article" date="2014" name="Nat. Commun.">
        <title>LRRC19 expressed in the kidney induces TRAF2/6-mediated signals to prevent infection by uropathogenic bacteria.</title>
        <authorList>
            <person name="Su X."/>
            <person name="Min S."/>
            <person name="Cao S."/>
            <person name="Yan H."/>
            <person name="Zhao Y."/>
            <person name="Li H."/>
            <person name="Chai L."/>
            <person name="Mei S."/>
            <person name="Yang J."/>
            <person name="Zhang Y."/>
            <person name="Zhang Z."/>
            <person name="Liu F."/>
            <person name="Sun W."/>
            <person name="Che Y."/>
            <person name="Yang R."/>
        </authorList>
    </citation>
    <scope>TISSUE SPECIFICITY</scope>
    <scope>INTERACTION WITH TRAF2 AND TRAF6</scope>
</reference>
<organism>
    <name type="scientific">Homo sapiens</name>
    <name type="common">Human</name>
    <dbReference type="NCBI Taxonomy" id="9606"/>
    <lineage>
        <taxon>Eukaryota</taxon>
        <taxon>Metazoa</taxon>
        <taxon>Chordata</taxon>
        <taxon>Craniata</taxon>
        <taxon>Vertebrata</taxon>
        <taxon>Euteleostomi</taxon>
        <taxon>Mammalia</taxon>
        <taxon>Eutheria</taxon>
        <taxon>Euarchontoglires</taxon>
        <taxon>Primates</taxon>
        <taxon>Haplorrhini</taxon>
        <taxon>Catarrhini</taxon>
        <taxon>Hominidae</taxon>
        <taxon>Homo</taxon>
    </lineage>
</organism>
<keyword id="KW-0325">Glycoprotein</keyword>
<keyword id="KW-0433">Leucine-rich repeat</keyword>
<keyword id="KW-0472">Membrane</keyword>
<keyword id="KW-1267">Proteomics identification</keyword>
<keyword id="KW-1185">Reference proteome</keyword>
<keyword id="KW-0677">Repeat</keyword>
<keyword id="KW-0732">Signal</keyword>
<keyword id="KW-0812">Transmembrane</keyword>
<keyword id="KW-1133">Transmembrane helix</keyword>
<feature type="signal peptide" evidence="2">
    <location>
        <begin position="1"/>
        <end position="24"/>
    </location>
</feature>
<feature type="chain" id="PRO_0000021610" description="Leucine-rich repeat-containing protein 19">
    <location>
        <begin position="25"/>
        <end position="370"/>
    </location>
</feature>
<feature type="topological domain" description="Extracellular" evidence="2">
    <location>
        <begin position="25"/>
        <end position="270"/>
    </location>
</feature>
<feature type="transmembrane region" description="Helical" evidence="2">
    <location>
        <begin position="271"/>
        <end position="291"/>
    </location>
</feature>
<feature type="topological domain" description="Cytoplasmic" evidence="2">
    <location>
        <begin position="292"/>
        <end position="370"/>
    </location>
</feature>
<feature type="repeat" description="LRR 1" evidence="2">
    <location>
        <begin position="46"/>
        <end position="71"/>
    </location>
</feature>
<feature type="repeat" description="LRR 2" evidence="2">
    <location>
        <begin position="72"/>
        <end position="95"/>
    </location>
</feature>
<feature type="repeat" description="LRR 3" evidence="2">
    <location>
        <begin position="96"/>
        <end position="119"/>
    </location>
</feature>
<feature type="repeat" description="LRR 4" evidence="2">
    <location>
        <begin position="120"/>
        <end position="143"/>
    </location>
</feature>
<feature type="repeat" description="LRR 5" evidence="2">
    <location>
        <begin position="145"/>
        <end position="168"/>
    </location>
</feature>
<feature type="domain" description="LRRCT" evidence="2">
    <location>
        <begin position="176"/>
        <end position="227"/>
    </location>
</feature>
<feature type="glycosylation site" description="N-linked (GlcNAc...) asparagine" evidence="2">
    <location>
        <position position="32"/>
    </location>
</feature>
<feature type="glycosylation site" description="N-linked (GlcNAc...) asparagine" evidence="2">
    <location>
        <position position="37"/>
    </location>
</feature>
<feature type="glycosylation site" description="N-linked (GlcNAc...) asparagine" evidence="2">
    <location>
        <position position="62"/>
    </location>
</feature>
<feature type="glycosylation site" description="N-linked (GlcNAc...) asparagine" evidence="2">
    <location>
        <position position="95"/>
    </location>
</feature>
<feature type="glycosylation site" description="N-linked (GlcNAc...) asparagine" evidence="2">
    <location>
        <position position="179"/>
    </location>
</feature>
<feature type="glycosylation site" description="N-linked (GlcNAc...) asparagine" evidence="2">
    <location>
        <position position="192"/>
    </location>
</feature>
<feature type="glycosylation site" description="N-linked (GlcNAc...) asparagine" evidence="2">
    <location>
        <position position="195"/>
    </location>
</feature>
<feature type="glycosylation site" description="N-linked (GlcNAc...) asparagine" evidence="2">
    <location>
        <position position="202"/>
    </location>
</feature>
<feature type="glycosylation site" description="N-linked (GlcNAc...) asparagine" evidence="2">
    <location>
        <position position="251"/>
    </location>
</feature>
<feature type="glycosylation site" description="N-linked (GlcNAc...) asparagine" evidence="2">
    <location>
        <position position="256"/>
    </location>
</feature>
<sequence>MKVTGITILFWPLSMILLSDKIQSSKREVQCNFTEKNYTLIPADIKKDVTILDLSYNQITLNGTDTRVLQTYFLLTELYLIENKVTILHNNGFGNLSSLEILNICRNSIYVIQQGAFLGLNKLKQLYLCQNKIEQLNADVFVPLRSLKLLNLQGNLISYLDVPPLFHLELITLYGNLWNCSCSLFNLQNWLNTSNVTLENENITMCSYPNSLQSYNIKTVPHKAECHSKFPSSVTEDLYIHFQPISNSIFNSSSNNLTRNSEHEPLGKSWAFLVGVVVTVLTTSLLIFIAIKCPIWYNILLSYNHHRLEEHEAETYEDGFTGNPSSLSQIPETNSEETTVIFEQLHSFVVDDDGFIEDKYIDIHELCEEN</sequence>
<comment type="function">
    <text evidence="1 3 4">Pathogen-recognition receptor which mediates the activation of TRAF2- and TRAF6 NF-kappa-B signaling pathways and induces the expression of pro-inflammatory cytokines (PubMed:19679103, PubMed:25026888). In kidney, prevents infection by uropathogenic bacteria by inducing the production of cytokines, chemokines and antimicrobial substances. In gut, involved in host-microbiota interactions, plays a critical role in promoting the recruitment of immune cells and intestinal inflammation (By similarity).</text>
</comment>
<comment type="activity regulation">
    <text evidence="1">Activated by TLR ligands such as LPS, bacterial DNA and peptidoglycan.</text>
</comment>
<comment type="subunit">
    <text evidence="4">Interacts with TRAF2 and TRAF6.</text>
</comment>
<comment type="interaction">
    <interactant intactId="EBI-59037180">
        <id>Q9H756</id>
    </interactant>
    <interactant intactId="EBI-10090056">
        <id>Q72C43</id>
        <label>DVU_1441</label>
    </interactant>
    <organismsDiffer>true</organismsDiffer>
    <experiments>2</experiments>
</comment>
<comment type="subcellular location">
    <subcellularLocation>
        <location evidence="5">Membrane</location>
        <topology evidence="5">Single-pass type I membrane protein</topology>
    </subcellularLocation>
</comment>
<comment type="tissue specificity">
    <text evidence="4">Expressed in renal collecting duct epithelial cells.</text>
</comment>
<proteinExistence type="evidence at protein level"/>
<name>LRC19_HUMAN</name>
<protein>
    <recommendedName>
        <fullName evidence="5">Leucine-rich repeat-containing protein 19</fullName>
    </recommendedName>
</protein>
<evidence type="ECO:0000250" key="1">
    <source>
        <dbReference type="UniProtKB" id="Q8BZT5"/>
    </source>
</evidence>
<evidence type="ECO:0000255" key="2"/>
<evidence type="ECO:0000269" key="3">
    <source>
    </source>
</evidence>
<evidence type="ECO:0000269" key="4">
    <source>
    </source>
</evidence>
<evidence type="ECO:0000305" key="5"/>
<evidence type="ECO:0000312" key="6">
    <source>
        <dbReference type="HGNC" id="HGNC:23379"/>
    </source>
</evidence>
<gene>
    <name evidence="6" type="primary">LRRC19</name>
</gene>
<accession>Q9H756</accession>
<accession>A0AV00</accession>
<accession>B9EG91</accession>